<protein>
    <recommendedName>
        <fullName evidence="1">Phosphatidylglycerol--prolipoprotein diacylglyceryl transferase</fullName>
        <ecNumber evidence="1">2.5.1.145</ecNumber>
    </recommendedName>
</protein>
<name>LGT_CLOB6</name>
<proteinExistence type="inferred from homology"/>
<feature type="chain" id="PRO_1000213650" description="Phosphatidylglycerol--prolipoprotein diacylglyceryl transferase">
    <location>
        <begin position="1"/>
        <end position="250"/>
    </location>
</feature>
<feature type="transmembrane region" description="Helical" evidence="1">
    <location>
        <begin position="11"/>
        <end position="31"/>
    </location>
</feature>
<feature type="transmembrane region" description="Helical" evidence="1">
    <location>
        <begin position="49"/>
        <end position="69"/>
    </location>
</feature>
<feature type="transmembrane region" description="Helical" evidence="1">
    <location>
        <begin position="84"/>
        <end position="104"/>
    </location>
</feature>
<feature type="transmembrane region" description="Helical" evidence="1">
    <location>
        <begin position="109"/>
        <end position="129"/>
    </location>
</feature>
<feature type="transmembrane region" description="Helical" evidence="1">
    <location>
        <begin position="169"/>
        <end position="189"/>
    </location>
</feature>
<feature type="transmembrane region" description="Helical" evidence="1">
    <location>
        <begin position="196"/>
        <end position="216"/>
    </location>
</feature>
<feature type="transmembrane region" description="Helical" evidence="1">
    <location>
        <begin position="228"/>
        <end position="248"/>
    </location>
</feature>
<feature type="binding site" evidence="1">
    <location>
        <position position="130"/>
    </location>
    <ligand>
        <name>a 1,2-diacyl-sn-glycero-3-phospho-(1'-sn-glycerol)</name>
        <dbReference type="ChEBI" id="CHEBI:64716"/>
    </ligand>
</feature>
<dbReference type="EC" id="2.5.1.145" evidence="1"/>
<dbReference type="EMBL" id="CP001083">
    <property type="protein sequence ID" value="ACQ52629.1"/>
    <property type="molecule type" value="Genomic_DNA"/>
</dbReference>
<dbReference type="RefSeq" id="WP_012720711.1">
    <property type="nucleotide sequence ID" value="NC_012658.1"/>
</dbReference>
<dbReference type="SMR" id="C3KU54"/>
<dbReference type="KEGG" id="cbi:CLJ_B3481"/>
<dbReference type="HOGENOM" id="CLU_013386_0_1_9"/>
<dbReference type="UniPathway" id="UPA00664"/>
<dbReference type="Proteomes" id="UP000002333">
    <property type="component" value="Chromosome"/>
</dbReference>
<dbReference type="GO" id="GO:0005886">
    <property type="term" value="C:plasma membrane"/>
    <property type="evidence" value="ECO:0007669"/>
    <property type="project" value="UniProtKB-SubCell"/>
</dbReference>
<dbReference type="GO" id="GO:0008961">
    <property type="term" value="F:phosphatidylglycerol-prolipoprotein diacylglyceryl transferase activity"/>
    <property type="evidence" value="ECO:0007669"/>
    <property type="project" value="UniProtKB-UniRule"/>
</dbReference>
<dbReference type="GO" id="GO:0042158">
    <property type="term" value="P:lipoprotein biosynthetic process"/>
    <property type="evidence" value="ECO:0007669"/>
    <property type="project" value="UniProtKB-UniRule"/>
</dbReference>
<dbReference type="HAMAP" id="MF_01147">
    <property type="entry name" value="Lgt"/>
    <property type="match status" value="1"/>
</dbReference>
<dbReference type="InterPro" id="IPR001640">
    <property type="entry name" value="Lgt"/>
</dbReference>
<dbReference type="NCBIfam" id="TIGR00544">
    <property type="entry name" value="lgt"/>
    <property type="match status" value="1"/>
</dbReference>
<dbReference type="PANTHER" id="PTHR30589:SF0">
    <property type="entry name" value="PHOSPHATIDYLGLYCEROL--PROLIPOPROTEIN DIACYLGLYCERYL TRANSFERASE"/>
    <property type="match status" value="1"/>
</dbReference>
<dbReference type="PANTHER" id="PTHR30589">
    <property type="entry name" value="PROLIPOPROTEIN DIACYLGLYCERYL TRANSFERASE"/>
    <property type="match status" value="1"/>
</dbReference>
<dbReference type="Pfam" id="PF01790">
    <property type="entry name" value="LGT"/>
    <property type="match status" value="1"/>
</dbReference>
<dbReference type="PROSITE" id="PS01311">
    <property type="entry name" value="LGT"/>
    <property type="match status" value="1"/>
</dbReference>
<keyword id="KW-1003">Cell membrane</keyword>
<keyword id="KW-0472">Membrane</keyword>
<keyword id="KW-0808">Transferase</keyword>
<keyword id="KW-0812">Transmembrane</keyword>
<keyword id="KW-1133">Transmembrane helix</keyword>
<reference key="1">
    <citation type="submission" date="2008-05" db="EMBL/GenBank/DDBJ databases">
        <title>Genome sequence of Clostridium botulinum Ba4 strain 657.</title>
        <authorList>
            <person name="Shrivastava S."/>
            <person name="Brown J.L."/>
            <person name="Bruce D."/>
            <person name="Detter C."/>
            <person name="Munk C."/>
            <person name="Smith L.A."/>
            <person name="Smith T.J."/>
            <person name="Sutton G."/>
            <person name="Brettin T.S."/>
        </authorList>
    </citation>
    <scope>NUCLEOTIDE SEQUENCE [LARGE SCALE GENOMIC DNA]</scope>
    <source>
        <strain>657 / Type Ba4</strain>
    </source>
</reference>
<organism>
    <name type="scientific">Clostridium botulinum (strain 657 / Type Ba4)</name>
    <dbReference type="NCBI Taxonomy" id="515621"/>
    <lineage>
        <taxon>Bacteria</taxon>
        <taxon>Bacillati</taxon>
        <taxon>Bacillota</taxon>
        <taxon>Clostridia</taxon>
        <taxon>Eubacteriales</taxon>
        <taxon>Clostridiaceae</taxon>
        <taxon>Clostridium</taxon>
    </lineage>
</organism>
<accession>C3KU54</accession>
<comment type="function">
    <text evidence="1">Catalyzes the transfer of the diacylglyceryl group from phosphatidylglycerol to the sulfhydryl group of the N-terminal cysteine of a prolipoprotein, the first step in the formation of mature lipoproteins.</text>
</comment>
<comment type="catalytic activity">
    <reaction evidence="1">
        <text>L-cysteinyl-[prolipoprotein] + a 1,2-diacyl-sn-glycero-3-phospho-(1'-sn-glycerol) = an S-1,2-diacyl-sn-glyceryl-L-cysteinyl-[prolipoprotein] + sn-glycerol 1-phosphate + H(+)</text>
        <dbReference type="Rhea" id="RHEA:56712"/>
        <dbReference type="Rhea" id="RHEA-COMP:14679"/>
        <dbReference type="Rhea" id="RHEA-COMP:14680"/>
        <dbReference type="ChEBI" id="CHEBI:15378"/>
        <dbReference type="ChEBI" id="CHEBI:29950"/>
        <dbReference type="ChEBI" id="CHEBI:57685"/>
        <dbReference type="ChEBI" id="CHEBI:64716"/>
        <dbReference type="ChEBI" id="CHEBI:140658"/>
        <dbReference type="EC" id="2.5.1.145"/>
    </reaction>
</comment>
<comment type="pathway">
    <text evidence="1">Protein modification; lipoprotein biosynthesis (diacylglyceryl transfer).</text>
</comment>
<comment type="subcellular location">
    <subcellularLocation>
        <location evidence="1">Cell membrane</location>
        <topology evidence="1">Multi-pass membrane protein</topology>
    </subcellularLocation>
</comment>
<comment type="similarity">
    <text evidence="1">Belongs to the Lgt family.</text>
</comment>
<gene>
    <name evidence="1" type="primary">lgt</name>
    <name type="ordered locus">CLJ_B3481</name>
</gene>
<sequence length="250" mass="28596">MNPIAFHVGNLAIRWYGVIISIGAALGLLLAMYNCKIREASYDEFINMFLIAFPSAIIGARLYYVIFEFEDYRDNLINIFNTRQGGLAIHGGIIFGVLAVYIYLKYRKESFFEYVDVAAPSIILGQAIGRWGNFFNSEAHGGPVTKEFISKFPQFIQKGMFIEGTYYHPTFLYESIWNFIVCIFLVYLLKKTKKKGIVFMAYIGLYSLGRFFIEGLRTDSLYLGSIRVAQLISVLGIILSIFFIYNIIKN</sequence>
<evidence type="ECO:0000255" key="1">
    <source>
        <dbReference type="HAMAP-Rule" id="MF_01147"/>
    </source>
</evidence>